<gene>
    <name type="ordered locus">TP_0041</name>
</gene>
<protein>
    <recommendedName>
        <fullName>Uncharacterized protein TP_0041</fullName>
    </recommendedName>
</protein>
<dbReference type="EMBL" id="AE000520">
    <property type="protein sequence ID" value="AAC65041.1"/>
    <property type="molecule type" value="Genomic_DNA"/>
</dbReference>
<dbReference type="PIR" id="H71373">
    <property type="entry name" value="H71373"/>
</dbReference>
<dbReference type="IntAct" id="O83082">
    <property type="interactions" value="5"/>
</dbReference>
<dbReference type="EnsemblBacteria" id="AAC65041">
    <property type="protein sequence ID" value="AAC65041"/>
    <property type="gene ID" value="TP_0041"/>
</dbReference>
<dbReference type="KEGG" id="tpa:TP_0041"/>
<dbReference type="HOGENOM" id="CLU_3349904_0_0_12"/>
<dbReference type="Proteomes" id="UP000000811">
    <property type="component" value="Chromosome"/>
</dbReference>
<organism>
    <name type="scientific">Treponema pallidum (strain Nichols)</name>
    <dbReference type="NCBI Taxonomy" id="243276"/>
    <lineage>
        <taxon>Bacteria</taxon>
        <taxon>Pseudomonadati</taxon>
        <taxon>Spirochaetota</taxon>
        <taxon>Spirochaetia</taxon>
        <taxon>Spirochaetales</taxon>
        <taxon>Treponemataceae</taxon>
        <taxon>Treponema</taxon>
    </lineage>
</organism>
<name>Y041_TREPA</name>
<evidence type="ECO:0000256" key="1">
    <source>
        <dbReference type="SAM" id="MobiDB-lite"/>
    </source>
</evidence>
<sequence length="40" mass="4391">MNRMLSLSVQSQRAPASPSPYGLKIDKRVSPDYARAGVRS</sequence>
<accession>O83082</accession>
<keyword id="KW-1185">Reference proteome</keyword>
<proteinExistence type="predicted"/>
<feature type="chain" id="PRO_0000202181" description="Uncharacterized protein TP_0041">
    <location>
        <begin position="1"/>
        <end position="40"/>
    </location>
</feature>
<feature type="region of interest" description="Disordered" evidence="1">
    <location>
        <begin position="1"/>
        <end position="25"/>
    </location>
</feature>
<feature type="compositionally biased region" description="Polar residues" evidence="1">
    <location>
        <begin position="1"/>
        <end position="14"/>
    </location>
</feature>
<reference key="1">
    <citation type="journal article" date="1998" name="Science">
        <title>Complete genome sequence of Treponema pallidum, the syphilis spirochete.</title>
        <authorList>
            <person name="Fraser C.M."/>
            <person name="Norris S.J."/>
            <person name="Weinstock G.M."/>
            <person name="White O."/>
            <person name="Sutton G.G."/>
            <person name="Dodson R.J."/>
            <person name="Gwinn M.L."/>
            <person name="Hickey E.K."/>
            <person name="Clayton R.A."/>
            <person name="Ketchum K.A."/>
            <person name="Sodergren E."/>
            <person name="Hardham J.M."/>
            <person name="McLeod M.P."/>
            <person name="Salzberg S.L."/>
            <person name="Peterson J.D."/>
            <person name="Khalak H.G."/>
            <person name="Richardson D.L."/>
            <person name="Howell J.K."/>
            <person name="Chidambaram M."/>
            <person name="Utterback T.R."/>
            <person name="McDonald L.A."/>
            <person name="Artiach P."/>
            <person name="Bowman C."/>
            <person name="Cotton M.D."/>
            <person name="Fujii C."/>
            <person name="Garland S.A."/>
            <person name="Hatch B."/>
            <person name="Horst K."/>
            <person name="Roberts K.M."/>
            <person name="Sandusky M."/>
            <person name="Weidman J.F."/>
            <person name="Smith H.O."/>
            <person name="Venter J.C."/>
        </authorList>
    </citation>
    <scope>NUCLEOTIDE SEQUENCE [LARGE SCALE GENOMIC DNA]</scope>
    <source>
        <strain>Nichols</strain>
    </source>
</reference>